<feature type="chain" id="PRO_0000179019" description="GTPase Der">
    <location>
        <begin position="1"/>
        <end position="485"/>
    </location>
</feature>
<feature type="domain" description="EngA-type G 1">
    <location>
        <begin position="3"/>
        <end position="167"/>
    </location>
</feature>
<feature type="domain" description="EngA-type G 2">
    <location>
        <begin position="176"/>
        <end position="349"/>
    </location>
</feature>
<feature type="domain" description="KH-like">
    <location>
        <begin position="350"/>
        <end position="434"/>
    </location>
</feature>
<feature type="region of interest" description="Disordered" evidence="3">
    <location>
        <begin position="435"/>
        <end position="485"/>
    </location>
</feature>
<feature type="compositionally biased region" description="Basic and acidic residues" evidence="3">
    <location>
        <begin position="457"/>
        <end position="469"/>
    </location>
</feature>
<feature type="compositionally biased region" description="Basic residues" evidence="3">
    <location>
        <begin position="470"/>
        <end position="485"/>
    </location>
</feature>
<feature type="binding site" evidence="2">
    <location>
        <begin position="9"/>
        <end position="16"/>
    </location>
    <ligand>
        <name>GTP</name>
        <dbReference type="ChEBI" id="CHEBI:37565"/>
        <label>1</label>
    </ligand>
</feature>
<feature type="binding site" evidence="2">
    <location>
        <begin position="56"/>
        <end position="60"/>
    </location>
    <ligand>
        <name>GTP</name>
        <dbReference type="ChEBI" id="CHEBI:37565"/>
        <label>1</label>
    </ligand>
</feature>
<feature type="binding site" evidence="2">
    <location>
        <begin position="119"/>
        <end position="122"/>
    </location>
    <ligand>
        <name>GTP</name>
        <dbReference type="ChEBI" id="CHEBI:37565"/>
        <label>1</label>
    </ligand>
</feature>
<feature type="binding site" evidence="2">
    <location>
        <begin position="182"/>
        <end position="189"/>
    </location>
    <ligand>
        <name>GTP</name>
        <dbReference type="ChEBI" id="CHEBI:37565"/>
        <label>2</label>
    </ligand>
</feature>
<feature type="binding site" evidence="2">
    <location>
        <begin position="229"/>
        <end position="233"/>
    </location>
    <ligand>
        <name>GTP</name>
        <dbReference type="ChEBI" id="CHEBI:37565"/>
        <label>2</label>
    </ligand>
</feature>
<feature type="binding site" evidence="2">
    <location>
        <begin position="294"/>
        <end position="297"/>
    </location>
    <ligand>
        <name>GTP</name>
        <dbReference type="ChEBI" id="CHEBI:37565"/>
        <label>2</label>
    </ligand>
</feature>
<reference key="1">
    <citation type="journal article" date="2000" name="Genetics">
        <title>A homologue of the recombination-dependent growth gene, rdgC, is involved in gonococcal pilin antigenic variation.</title>
        <authorList>
            <person name="Mehr I.J."/>
            <person name="Long C.D."/>
            <person name="Serkin C.D."/>
            <person name="Seifert H.S."/>
        </authorList>
    </citation>
    <scope>NUCLEOTIDE SEQUENCE [GENOMIC DNA]</scope>
    <scope>DISRUPTION PHENOTYPE</scope>
</reference>
<reference key="2">
    <citation type="submission" date="2003-03" db="EMBL/GenBank/DDBJ databases">
        <title>The complete genome sequence of Neisseria gonorrhoeae.</title>
        <authorList>
            <person name="Lewis L.A."/>
            <person name="Gillaspy A.F."/>
            <person name="McLaughlin R.E."/>
            <person name="Gipson M."/>
            <person name="Ducey T.F."/>
            <person name="Ownbey T."/>
            <person name="Hartman K."/>
            <person name="Nydick C."/>
            <person name="Carson M.B."/>
            <person name="Vaughn J."/>
            <person name="Thomson C."/>
            <person name="Song L."/>
            <person name="Lin S."/>
            <person name="Yuan X."/>
            <person name="Najar F."/>
            <person name="Zhan M."/>
            <person name="Ren Q."/>
            <person name="Zhu H."/>
            <person name="Qi S."/>
            <person name="Kenton S.M."/>
            <person name="Lai H."/>
            <person name="White J.D."/>
            <person name="Clifton S."/>
            <person name="Roe B.A."/>
            <person name="Dyer D.W."/>
        </authorList>
    </citation>
    <scope>NUCLEOTIDE SEQUENCE [LARGE SCALE GENOMIC DNA]</scope>
    <source>
        <strain>ATCC 700825 / FA 1090</strain>
    </source>
</reference>
<organism>
    <name type="scientific">Neisseria gonorrhoeae (strain ATCC 700825 / FA 1090)</name>
    <dbReference type="NCBI Taxonomy" id="242231"/>
    <lineage>
        <taxon>Bacteria</taxon>
        <taxon>Pseudomonadati</taxon>
        <taxon>Pseudomonadota</taxon>
        <taxon>Betaproteobacteria</taxon>
        <taxon>Neisseriales</taxon>
        <taxon>Neisseriaceae</taxon>
        <taxon>Neisseria</taxon>
    </lineage>
</organism>
<proteinExistence type="inferred from homology"/>
<comment type="function">
    <text evidence="1">GTPase that plays an essential role in the late steps of ribosome biogenesis.</text>
</comment>
<comment type="subunit">
    <text evidence="1">Associates with the 50S ribosomal subunit.</text>
</comment>
<comment type="disruption phenotype">
    <text evidence="4">Essential.</text>
</comment>
<comment type="similarity">
    <text evidence="5">Belongs to the TRAFAC class TrmE-Era-EngA-EngB-Septin-like GTPase superfamily. EngA (Der) GTPase family.</text>
</comment>
<dbReference type="EMBL" id="AF058711">
    <property type="protein sequence ID" value="AAC63508.1"/>
    <property type="molecule type" value="Genomic_DNA"/>
</dbReference>
<dbReference type="EMBL" id="AE004969">
    <property type="protein sequence ID" value="AAW89167.1"/>
    <property type="molecule type" value="Genomic_DNA"/>
</dbReference>
<dbReference type="RefSeq" id="WP_010951041.1">
    <property type="nucleotide sequence ID" value="NC_002946.2"/>
</dbReference>
<dbReference type="RefSeq" id="YP_207579.1">
    <property type="nucleotide sequence ID" value="NC_002946.2"/>
</dbReference>
<dbReference type="SMR" id="O87407"/>
<dbReference type="STRING" id="242231.NGO_0424"/>
<dbReference type="KEGG" id="ngo:NGO_0424"/>
<dbReference type="PATRIC" id="fig|242231.10.peg.508"/>
<dbReference type="HOGENOM" id="CLU_016077_6_2_4"/>
<dbReference type="Proteomes" id="UP000000535">
    <property type="component" value="Chromosome"/>
</dbReference>
<dbReference type="GO" id="GO:0016887">
    <property type="term" value="F:ATP hydrolysis activity"/>
    <property type="evidence" value="ECO:0007669"/>
    <property type="project" value="InterPro"/>
</dbReference>
<dbReference type="GO" id="GO:0005525">
    <property type="term" value="F:GTP binding"/>
    <property type="evidence" value="ECO:0007669"/>
    <property type="project" value="UniProtKB-UniRule"/>
</dbReference>
<dbReference type="GO" id="GO:0043022">
    <property type="term" value="F:ribosome binding"/>
    <property type="evidence" value="ECO:0007669"/>
    <property type="project" value="TreeGrafter"/>
</dbReference>
<dbReference type="GO" id="GO:0042254">
    <property type="term" value="P:ribosome biogenesis"/>
    <property type="evidence" value="ECO:0007669"/>
    <property type="project" value="UniProtKB-KW"/>
</dbReference>
<dbReference type="CDD" id="cd01894">
    <property type="entry name" value="EngA1"/>
    <property type="match status" value="1"/>
</dbReference>
<dbReference type="CDD" id="cd01895">
    <property type="entry name" value="EngA2"/>
    <property type="match status" value="1"/>
</dbReference>
<dbReference type="FunFam" id="3.30.300.20:FF:000023">
    <property type="entry name" value="GTPase Der"/>
    <property type="match status" value="1"/>
</dbReference>
<dbReference type="FunFam" id="3.40.50.300:FF:000040">
    <property type="entry name" value="GTPase Der"/>
    <property type="match status" value="1"/>
</dbReference>
<dbReference type="FunFam" id="3.40.50.300:FF:000057">
    <property type="entry name" value="GTPase Der"/>
    <property type="match status" value="1"/>
</dbReference>
<dbReference type="Gene3D" id="3.30.300.20">
    <property type="match status" value="1"/>
</dbReference>
<dbReference type="Gene3D" id="3.40.50.300">
    <property type="entry name" value="P-loop containing nucleotide triphosphate hydrolases"/>
    <property type="match status" value="2"/>
</dbReference>
<dbReference type="HAMAP" id="MF_00195">
    <property type="entry name" value="GTPase_Der"/>
    <property type="match status" value="1"/>
</dbReference>
<dbReference type="InterPro" id="IPR003593">
    <property type="entry name" value="AAA+_ATPase"/>
</dbReference>
<dbReference type="InterPro" id="IPR031166">
    <property type="entry name" value="G_ENGA"/>
</dbReference>
<dbReference type="InterPro" id="IPR006073">
    <property type="entry name" value="GTP-bd"/>
</dbReference>
<dbReference type="InterPro" id="IPR016484">
    <property type="entry name" value="GTPase_Der"/>
</dbReference>
<dbReference type="InterPro" id="IPR032859">
    <property type="entry name" value="KH_dom-like"/>
</dbReference>
<dbReference type="InterPro" id="IPR015946">
    <property type="entry name" value="KH_dom-like_a/b"/>
</dbReference>
<dbReference type="InterPro" id="IPR027417">
    <property type="entry name" value="P-loop_NTPase"/>
</dbReference>
<dbReference type="InterPro" id="IPR005225">
    <property type="entry name" value="Small_GTP-bd"/>
</dbReference>
<dbReference type="NCBIfam" id="TIGR03594">
    <property type="entry name" value="GTPase_EngA"/>
    <property type="match status" value="1"/>
</dbReference>
<dbReference type="NCBIfam" id="TIGR00231">
    <property type="entry name" value="small_GTP"/>
    <property type="match status" value="2"/>
</dbReference>
<dbReference type="PANTHER" id="PTHR43834">
    <property type="entry name" value="GTPASE DER"/>
    <property type="match status" value="1"/>
</dbReference>
<dbReference type="PANTHER" id="PTHR43834:SF6">
    <property type="entry name" value="GTPASE DER"/>
    <property type="match status" value="1"/>
</dbReference>
<dbReference type="Pfam" id="PF14714">
    <property type="entry name" value="KH_dom-like"/>
    <property type="match status" value="1"/>
</dbReference>
<dbReference type="Pfam" id="PF01926">
    <property type="entry name" value="MMR_HSR1"/>
    <property type="match status" value="2"/>
</dbReference>
<dbReference type="PIRSF" id="PIRSF006485">
    <property type="entry name" value="GTP-binding_EngA"/>
    <property type="match status" value="1"/>
</dbReference>
<dbReference type="PRINTS" id="PR00326">
    <property type="entry name" value="GTP1OBG"/>
</dbReference>
<dbReference type="SMART" id="SM00382">
    <property type="entry name" value="AAA"/>
    <property type="match status" value="2"/>
</dbReference>
<dbReference type="SUPFAM" id="SSF52540">
    <property type="entry name" value="P-loop containing nucleoside triphosphate hydrolases"/>
    <property type="match status" value="2"/>
</dbReference>
<dbReference type="PROSITE" id="PS51712">
    <property type="entry name" value="G_ENGA"/>
    <property type="match status" value="2"/>
</dbReference>
<name>DER_NEIG1</name>
<protein>
    <recommendedName>
        <fullName>GTPase Der</fullName>
    </recommendedName>
    <alternativeName>
        <fullName>GTP-binding protein EngA</fullName>
    </alternativeName>
</protein>
<gene>
    <name type="primary">der</name>
    <name type="synonym">engA</name>
    <name type="ordered locus">NGO_0424</name>
</gene>
<keyword id="KW-0342">GTP-binding</keyword>
<keyword id="KW-0547">Nucleotide-binding</keyword>
<keyword id="KW-1185">Reference proteome</keyword>
<keyword id="KW-0677">Repeat</keyword>
<keyword id="KW-0690">Ribosome biogenesis</keyword>
<evidence type="ECO:0000250" key="1"/>
<evidence type="ECO:0000255" key="2"/>
<evidence type="ECO:0000256" key="3">
    <source>
        <dbReference type="SAM" id="MobiDB-lite"/>
    </source>
</evidence>
<evidence type="ECO:0000269" key="4">
    <source>
    </source>
</evidence>
<evidence type="ECO:0000305" key="5"/>
<accession>O87407</accession>
<accession>Q5F9H0</accession>
<sequence>MKPTIALIGRPNVGKSTLFNRLTRTKDALVHDLPGLTRDRHYGHGKVGSKPYFVIDTGGFEPVVDSGILHEMAKQTLQAVDEADAVVFLVDGRTGLTPQDKIIADRLRQSPRPVYLAVNKGEGGDRAVLAAEFYELALGEPHVISGAHGDGVYYLIEEILENFPEPEAEEADAKHPVFAVIGRPNVGKSTLVNAILGEKRVIAFDMAGTTRDSIHIDFEREGKPFTIIDTAGVRRRGKVDEAVEKFSVIKAMQAVEAANVAVLVLDAQQDIADQDATIAGFALEAGRALVVAVNKWDGISEERREQVKRDISRKLYFLDFAKFHFISALKERGIDGLFESIQAAYNAAMIKMPTPKITRVLQTAVERQQPPRAGLVRPKMRYAHQGGMNPPVIVVHGNSLHAISDSYTRYLTQTFRKAFNLQGTPLRIQYNVSENPYENAEDKPKKKPLRRVSLSNRIEKREGRKEEKNRFKKKTKVSVKKQFSK</sequence>